<keyword id="KW-0030">Aminoacyl-tRNA synthetase</keyword>
<keyword id="KW-0067">ATP-binding</keyword>
<keyword id="KW-0963">Cytoplasm</keyword>
<keyword id="KW-0436">Ligase</keyword>
<keyword id="KW-0479">Metal-binding</keyword>
<keyword id="KW-0547">Nucleotide-binding</keyword>
<keyword id="KW-0648">Protein biosynthesis</keyword>
<keyword id="KW-0862">Zinc</keyword>
<name>SYI_KLEP3</name>
<organism>
    <name type="scientific">Klebsiella pneumoniae (strain 342)</name>
    <dbReference type="NCBI Taxonomy" id="507522"/>
    <lineage>
        <taxon>Bacteria</taxon>
        <taxon>Pseudomonadati</taxon>
        <taxon>Pseudomonadota</taxon>
        <taxon>Gammaproteobacteria</taxon>
        <taxon>Enterobacterales</taxon>
        <taxon>Enterobacteriaceae</taxon>
        <taxon>Klebsiella/Raoultella group</taxon>
        <taxon>Klebsiella</taxon>
        <taxon>Klebsiella pneumoniae complex</taxon>
    </lineage>
</organism>
<accession>B5Y235</accession>
<feature type="chain" id="PRO_1000189173" description="Isoleucine--tRNA ligase">
    <location>
        <begin position="1"/>
        <end position="938"/>
    </location>
</feature>
<feature type="short sequence motif" description="'HIGH' region">
    <location>
        <begin position="58"/>
        <end position="68"/>
    </location>
</feature>
<feature type="short sequence motif" description="'KMSKS' region">
    <location>
        <begin position="602"/>
        <end position="606"/>
    </location>
</feature>
<feature type="binding site" evidence="1">
    <location>
        <position position="561"/>
    </location>
    <ligand>
        <name>L-isoleucyl-5'-AMP</name>
        <dbReference type="ChEBI" id="CHEBI:178002"/>
    </ligand>
</feature>
<feature type="binding site" evidence="1">
    <location>
        <position position="605"/>
    </location>
    <ligand>
        <name>ATP</name>
        <dbReference type="ChEBI" id="CHEBI:30616"/>
    </ligand>
</feature>
<feature type="binding site" evidence="1">
    <location>
        <position position="901"/>
    </location>
    <ligand>
        <name>Zn(2+)</name>
        <dbReference type="ChEBI" id="CHEBI:29105"/>
    </ligand>
</feature>
<feature type="binding site" evidence="1">
    <location>
        <position position="904"/>
    </location>
    <ligand>
        <name>Zn(2+)</name>
        <dbReference type="ChEBI" id="CHEBI:29105"/>
    </ligand>
</feature>
<feature type="binding site" evidence="1">
    <location>
        <position position="921"/>
    </location>
    <ligand>
        <name>Zn(2+)</name>
        <dbReference type="ChEBI" id="CHEBI:29105"/>
    </ligand>
</feature>
<feature type="binding site" evidence="1">
    <location>
        <position position="924"/>
    </location>
    <ligand>
        <name>Zn(2+)</name>
        <dbReference type="ChEBI" id="CHEBI:29105"/>
    </ligand>
</feature>
<proteinExistence type="inferred from homology"/>
<sequence>MSDYKSTLNLPETGFPMRGDLAKREPGMLARWTDDDLYGIIRAAKKGKKTFILHDGPPYANGSIHIGHSVNKILKDIIVKSKGLTGYDSPYVPGWDCHGLPIELKVEQQYGKPGEKFTAAEFRSKCREYAAEQIDGQRKDFIRLGVLGDWSRPYLTMDFKTEANIIRALGKIIGNGHLHKGAKPVHWCVDCRSALAEAEVEYYDKTSPSIDVAFHAVDKAAVLAKFGVADVNGPVSLVIWTTTPWTLPANRAISLSPEFDYALVQVDGQALILAKDLVESVMKRVGATDYTILAAVQGSELELMRFKHPFLDFDVPAILGDHVTLDAGTGAVHTAGGHGPDDYTISQKYGLEIANPVGPDGAYLPGTYPSLDGINVFKANDIIVEMLRDSGALLHVEKMQHSYPCCWRHKSPIIFRATPQWFVSMDQKGLRAQSLKEIKGVQWIPDWGQARIESMVANRPDWCISRQRTWGVPMSLFVHKETHELHPRTLELMEEVAKRVEVDGIQAWWDLDSRDILGDDADSYEKVPDTLDVWFDSGSTHSSVVDVRPEFAGHAADMYLEGSDQHRGWFMSSLMISTAMKGKAPYRQVLTHGFTVDGQGRKMSKSIGNTVSPQDVMNKLGADILRLWVASTDYTGEMAVSDEILKRAADSYRRIRNTARFLLANLNGFDPAKDMVKPEEMVVLDRWAVGCAQAAQEDILKAYESYDFHEVVQRLMRFCSIEMGSFYLDIIKDRQYTAKADSVARRSCQTALFHIVEALVRWMAPIMSFTADEIWGYLPGDREKYVFTGEWYKGLFGLADDEAMNDGFWDELLKVRGEVNKVIEQARADKKVGGSLEAAVTLYADADLAAKLNALGDELRFVLLTSGANVADYAQAPADAWQSDLLKGLKVVLSKAEGEKCPRCWHYTSDVGKVAEHAEICGRCVSNVAGNGEQRKFA</sequence>
<dbReference type="EC" id="6.1.1.5" evidence="1"/>
<dbReference type="EMBL" id="CP000964">
    <property type="protein sequence ID" value="ACI10800.1"/>
    <property type="molecule type" value="Genomic_DNA"/>
</dbReference>
<dbReference type="SMR" id="B5Y235"/>
<dbReference type="KEGG" id="kpe:KPK_4735"/>
<dbReference type="HOGENOM" id="CLU_001493_7_1_6"/>
<dbReference type="Proteomes" id="UP000001734">
    <property type="component" value="Chromosome"/>
</dbReference>
<dbReference type="GO" id="GO:0005829">
    <property type="term" value="C:cytosol"/>
    <property type="evidence" value="ECO:0007669"/>
    <property type="project" value="TreeGrafter"/>
</dbReference>
<dbReference type="GO" id="GO:0002161">
    <property type="term" value="F:aminoacyl-tRNA deacylase activity"/>
    <property type="evidence" value="ECO:0007669"/>
    <property type="project" value="InterPro"/>
</dbReference>
<dbReference type="GO" id="GO:0005524">
    <property type="term" value="F:ATP binding"/>
    <property type="evidence" value="ECO:0007669"/>
    <property type="project" value="UniProtKB-UniRule"/>
</dbReference>
<dbReference type="GO" id="GO:0004822">
    <property type="term" value="F:isoleucine-tRNA ligase activity"/>
    <property type="evidence" value="ECO:0007669"/>
    <property type="project" value="UniProtKB-UniRule"/>
</dbReference>
<dbReference type="GO" id="GO:0000049">
    <property type="term" value="F:tRNA binding"/>
    <property type="evidence" value="ECO:0007669"/>
    <property type="project" value="InterPro"/>
</dbReference>
<dbReference type="GO" id="GO:0008270">
    <property type="term" value="F:zinc ion binding"/>
    <property type="evidence" value="ECO:0007669"/>
    <property type="project" value="UniProtKB-UniRule"/>
</dbReference>
<dbReference type="GO" id="GO:0006428">
    <property type="term" value="P:isoleucyl-tRNA aminoacylation"/>
    <property type="evidence" value="ECO:0007669"/>
    <property type="project" value="UniProtKB-UniRule"/>
</dbReference>
<dbReference type="CDD" id="cd07960">
    <property type="entry name" value="Anticodon_Ia_Ile_BEm"/>
    <property type="match status" value="1"/>
</dbReference>
<dbReference type="CDD" id="cd00818">
    <property type="entry name" value="IleRS_core"/>
    <property type="match status" value="1"/>
</dbReference>
<dbReference type="FunFam" id="1.10.730.20:FF:000001">
    <property type="entry name" value="Isoleucine--tRNA ligase"/>
    <property type="match status" value="1"/>
</dbReference>
<dbReference type="FunFam" id="3.40.50.620:FF:000042">
    <property type="entry name" value="Isoleucine--tRNA ligase"/>
    <property type="match status" value="1"/>
</dbReference>
<dbReference type="FunFam" id="3.40.50.620:FF:000048">
    <property type="entry name" value="Isoleucine--tRNA ligase"/>
    <property type="match status" value="1"/>
</dbReference>
<dbReference type="FunFam" id="3.90.740.10:FF:000002">
    <property type="entry name" value="Isoleucine--tRNA ligase"/>
    <property type="match status" value="1"/>
</dbReference>
<dbReference type="Gene3D" id="1.10.730.20">
    <property type="match status" value="1"/>
</dbReference>
<dbReference type="Gene3D" id="3.40.50.620">
    <property type="entry name" value="HUPs"/>
    <property type="match status" value="2"/>
</dbReference>
<dbReference type="Gene3D" id="3.90.740.10">
    <property type="entry name" value="Valyl/Leucyl/Isoleucyl-tRNA synthetase, editing domain"/>
    <property type="match status" value="1"/>
</dbReference>
<dbReference type="HAMAP" id="MF_02002">
    <property type="entry name" value="Ile_tRNA_synth_type1"/>
    <property type="match status" value="1"/>
</dbReference>
<dbReference type="InterPro" id="IPR001412">
    <property type="entry name" value="aa-tRNA-synth_I_CS"/>
</dbReference>
<dbReference type="InterPro" id="IPR002300">
    <property type="entry name" value="aa-tRNA-synth_Ia"/>
</dbReference>
<dbReference type="InterPro" id="IPR033708">
    <property type="entry name" value="Anticodon_Ile_BEm"/>
</dbReference>
<dbReference type="InterPro" id="IPR002301">
    <property type="entry name" value="Ile-tRNA-ligase"/>
</dbReference>
<dbReference type="InterPro" id="IPR023585">
    <property type="entry name" value="Ile-tRNA-ligase_type1"/>
</dbReference>
<dbReference type="InterPro" id="IPR050081">
    <property type="entry name" value="Ile-tRNA_ligase"/>
</dbReference>
<dbReference type="InterPro" id="IPR013155">
    <property type="entry name" value="M/V/L/I-tRNA-synth_anticd-bd"/>
</dbReference>
<dbReference type="InterPro" id="IPR014729">
    <property type="entry name" value="Rossmann-like_a/b/a_fold"/>
</dbReference>
<dbReference type="InterPro" id="IPR009080">
    <property type="entry name" value="tRNAsynth_Ia_anticodon-bd"/>
</dbReference>
<dbReference type="InterPro" id="IPR009008">
    <property type="entry name" value="Val/Leu/Ile-tRNA-synth_edit"/>
</dbReference>
<dbReference type="InterPro" id="IPR010663">
    <property type="entry name" value="Znf_FPG/IleRS"/>
</dbReference>
<dbReference type="NCBIfam" id="TIGR00392">
    <property type="entry name" value="ileS"/>
    <property type="match status" value="1"/>
</dbReference>
<dbReference type="PANTHER" id="PTHR42765:SF1">
    <property type="entry name" value="ISOLEUCINE--TRNA LIGASE, MITOCHONDRIAL"/>
    <property type="match status" value="1"/>
</dbReference>
<dbReference type="PANTHER" id="PTHR42765">
    <property type="entry name" value="SOLEUCYL-TRNA SYNTHETASE"/>
    <property type="match status" value="1"/>
</dbReference>
<dbReference type="Pfam" id="PF08264">
    <property type="entry name" value="Anticodon_1"/>
    <property type="match status" value="1"/>
</dbReference>
<dbReference type="Pfam" id="PF00133">
    <property type="entry name" value="tRNA-synt_1"/>
    <property type="match status" value="1"/>
</dbReference>
<dbReference type="Pfam" id="PF06827">
    <property type="entry name" value="zf-FPG_IleRS"/>
    <property type="match status" value="1"/>
</dbReference>
<dbReference type="PRINTS" id="PR00984">
    <property type="entry name" value="TRNASYNTHILE"/>
</dbReference>
<dbReference type="SUPFAM" id="SSF47323">
    <property type="entry name" value="Anticodon-binding domain of a subclass of class I aminoacyl-tRNA synthetases"/>
    <property type="match status" value="1"/>
</dbReference>
<dbReference type="SUPFAM" id="SSF52374">
    <property type="entry name" value="Nucleotidylyl transferase"/>
    <property type="match status" value="1"/>
</dbReference>
<dbReference type="SUPFAM" id="SSF50677">
    <property type="entry name" value="ValRS/IleRS/LeuRS editing domain"/>
    <property type="match status" value="1"/>
</dbReference>
<dbReference type="PROSITE" id="PS00178">
    <property type="entry name" value="AA_TRNA_LIGASE_I"/>
    <property type="match status" value="1"/>
</dbReference>
<reference key="1">
    <citation type="journal article" date="2008" name="PLoS Genet.">
        <title>Complete genome sequence of the N2-fixing broad host range endophyte Klebsiella pneumoniae 342 and virulence predictions verified in mice.</title>
        <authorList>
            <person name="Fouts D.E."/>
            <person name="Tyler H.L."/>
            <person name="DeBoy R.T."/>
            <person name="Daugherty S."/>
            <person name="Ren Q."/>
            <person name="Badger J.H."/>
            <person name="Durkin A.S."/>
            <person name="Huot H."/>
            <person name="Shrivastava S."/>
            <person name="Kothari S."/>
            <person name="Dodson R.J."/>
            <person name="Mohamoud Y."/>
            <person name="Khouri H."/>
            <person name="Roesch L.F.W."/>
            <person name="Krogfelt K.A."/>
            <person name="Struve C."/>
            <person name="Triplett E.W."/>
            <person name="Methe B.A."/>
        </authorList>
    </citation>
    <scope>NUCLEOTIDE SEQUENCE [LARGE SCALE GENOMIC DNA]</scope>
    <source>
        <strain>342</strain>
    </source>
</reference>
<gene>
    <name evidence="1" type="primary">ileS</name>
    <name type="ordered locus">KPK_4735</name>
</gene>
<protein>
    <recommendedName>
        <fullName evidence="1">Isoleucine--tRNA ligase</fullName>
        <ecNumber evidence="1">6.1.1.5</ecNumber>
    </recommendedName>
    <alternativeName>
        <fullName evidence="1">Isoleucyl-tRNA synthetase</fullName>
        <shortName evidence="1">IleRS</shortName>
    </alternativeName>
</protein>
<comment type="function">
    <text evidence="1">Catalyzes the attachment of isoleucine to tRNA(Ile). As IleRS can inadvertently accommodate and process structurally similar amino acids such as valine, to avoid such errors it has two additional distinct tRNA(Ile)-dependent editing activities. One activity is designated as 'pretransfer' editing and involves the hydrolysis of activated Val-AMP. The other activity is designated 'posttransfer' editing and involves deacylation of mischarged Val-tRNA(Ile).</text>
</comment>
<comment type="catalytic activity">
    <reaction evidence="1">
        <text>tRNA(Ile) + L-isoleucine + ATP = L-isoleucyl-tRNA(Ile) + AMP + diphosphate</text>
        <dbReference type="Rhea" id="RHEA:11060"/>
        <dbReference type="Rhea" id="RHEA-COMP:9666"/>
        <dbReference type="Rhea" id="RHEA-COMP:9695"/>
        <dbReference type="ChEBI" id="CHEBI:30616"/>
        <dbReference type="ChEBI" id="CHEBI:33019"/>
        <dbReference type="ChEBI" id="CHEBI:58045"/>
        <dbReference type="ChEBI" id="CHEBI:78442"/>
        <dbReference type="ChEBI" id="CHEBI:78528"/>
        <dbReference type="ChEBI" id="CHEBI:456215"/>
        <dbReference type="EC" id="6.1.1.5"/>
    </reaction>
</comment>
<comment type="cofactor">
    <cofactor evidence="1">
        <name>Zn(2+)</name>
        <dbReference type="ChEBI" id="CHEBI:29105"/>
    </cofactor>
    <text evidence="1">Binds 1 zinc ion per subunit.</text>
</comment>
<comment type="subunit">
    <text evidence="1">Monomer.</text>
</comment>
<comment type="subcellular location">
    <subcellularLocation>
        <location evidence="1">Cytoplasm</location>
    </subcellularLocation>
</comment>
<comment type="domain">
    <text evidence="1">IleRS has two distinct active sites: one for aminoacylation and one for editing. The misactivated valine is translocated from the active site to the editing site, which sterically excludes the correctly activated isoleucine. The single editing site contains two valyl binding pockets, one specific for each substrate (Val-AMP or Val-tRNA(Ile)).</text>
</comment>
<comment type="similarity">
    <text evidence="1">Belongs to the class-I aminoacyl-tRNA synthetase family. IleS type 1 subfamily.</text>
</comment>
<evidence type="ECO:0000255" key="1">
    <source>
        <dbReference type="HAMAP-Rule" id="MF_02002"/>
    </source>
</evidence>